<keyword id="KW-0025">Alternative splicing</keyword>
<keyword id="KW-0067">ATP-binding</keyword>
<keyword id="KW-0966">Cell projection</keyword>
<keyword id="KW-0969">Cilium</keyword>
<keyword id="KW-0963">Cytoplasm</keyword>
<keyword id="KW-0206">Cytoskeleton</keyword>
<keyword id="KW-0436">Ligase</keyword>
<keyword id="KW-0460">Magnesium</keyword>
<keyword id="KW-0479">Metal-binding</keyword>
<keyword id="KW-0493">Microtubule</keyword>
<keyword id="KW-0547">Nucleotide-binding</keyword>
<keyword id="KW-1185">Reference proteome</keyword>
<organism>
    <name type="scientific">Homo sapiens</name>
    <name type="common">Human</name>
    <dbReference type="NCBI Taxonomy" id="9606"/>
    <lineage>
        <taxon>Eukaryota</taxon>
        <taxon>Metazoa</taxon>
        <taxon>Chordata</taxon>
        <taxon>Craniata</taxon>
        <taxon>Vertebrata</taxon>
        <taxon>Euteleostomi</taxon>
        <taxon>Mammalia</taxon>
        <taxon>Eutheria</taxon>
        <taxon>Euarchontoglires</taxon>
        <taxon>Primates</taxon>
        <taxon>Haplorrhini</taxon>
        <taxon>Catarrhini</taxon>
        <taxon>Hominidae</taxon>
        <taxon>Homo</taxon>
    </lineage>
</organism>
<proteinExistence type="evidence at protein level"/>
<evidence type="ECO:0000250" key="1">
    <source>
        <dbReference type="UniProtKB" id="A4Q9E8"/>
    </source>
</evidence>
<evidence type="ECO:0000250" key="2">
    <source>
        <dbReference type="UniProtKB" id="Q6ZT98"/>
    </source>
</evidence>
<evidence type="ECO:0000255" key="3"/>
<evidence type="ECO:0000255" key="4">
    <source>
        <dbReference type="PROSITE-ProRule" id="PRU00568"/>
    </source>
</evidence>
<evidence type="ECO:0000256" key="5">
    <source>
        <dbReference type="SAM" id="MobiDB-lite"/>
    </source>
</evidence>
<evidence type="ECO:0000269" key="6">
    <source>
    </source>
</evidence>
<evidence type="ECO:0000269" key="7">
    <source>
    </source>
</evidence>
<evidence type="ECO:0000269" key="8">
    <source>
    </source>
</evidence>
<evidence type="ECO:0000269" key="9">
    <source>
    </source>
</evidence>
<evidence type="ECO:0000269" key="10">
    <source>
    </source>
</evidence>
<evidence type="ECO:0000303" key="11">
    <source>
    </source>
</evidence>
<evidence type="ECO:0000303" key="12">
    <source>
    </source>
</evidence>
<evidence type="ECO:0000303" key="13">
    <source>
    </source>
</evidence>
<evidence type="ECO:0000303" key="14">
    <source>
    </source>
</evidence>
<evidence type="ECO:0000303" key="15">
    <source>
    </source>
</evidence>
<evidence type="ECO:0000305" key="16"/>
<evidence type="ECO:0000312" key="17">
    <source>
        <dbReference type="EMBL" id="AAH33563.1"/>
    </source>
</evidence>
<evidence type="ECO:0000312" key="18">
    <source>
        <dbReference type="EMBL" id="BAC04066.1"/>
    </source>
</evidence>
<evidence type="ECO:0000312" key="19">
    <source>
        <dbReference type="HGNC" id="HGNC:26664"/>
    </source>
</evidence>
<feature type="chain" id="PRO_0000326160" description="Tubulin polyglutamylase TTLL6">
    <location>
        <begin position="1"/>
        <end position="891"/>
    </location>
</feature>
<feature type="domain" description="TTL" evidence="4">
    <location>
        <begin position="106"/>
        <end position="449"/>
    </location>
</feature>
<feature type="region of interest" description="Disordered" evidence="5">
    <location>
        <begin position="1"/>
        <end position="25"/>
    </location>
</feature>
<feature type="region of interest" description="Disordered" evidence="5">
    <location>
        <begin position="44"/>
        <end position="106"/>
    </location>
</feature>
<feature type="region of interest" description="c-MTBD region" evidence="10">
    <location>
        <begin position="420"/>
        <end position="499"/>
    </location>
</feature>
<feature type="region of interest" description="Disordered" evidence="5">
    <location>
        <begin position="546"/>
        <end position="584"/>
    </location>
</feature>
<feature type="region of interest" description="Disordered" evidence="5">
    <location>
        <begin position="607"/>
        <end position="636"/>
    </location>
</feature>
<feature type="region of interest" description="Disordered" evidence="5">
    <location>
        <begin position="687"/>
        <end position="711"/>
    </location>
</feature>
<feature type="region of interest" description="Disordered" evidence="5">
    <location>
        <begin position="800"/>
        <end position="820"/>
    </location>
</feature>
<feature type="compositionally biased region" description="Basic and acidic residues" evidence="5">
    <location>
        <begin position="63"/>
        <end position="76"/>
    </location>
</feature>
<feature type="compositionally biased region" description="Low complexity" evidence="5">
    <location>
        <begin position="88"/>
        <end position="99"/>
    </location>
</feature>
<feature type="compositionally biased region" description="Polar residues" evidence="5">
    <location>
        <begin position="687"/>
        <end position="699"/>
    </location>
</feature>
<feature type="binding site" evidence="1">
    <location>
        <position position="223"/>
    </location>
    <ligand>
        <name>ATP</name>
        <dbReference type="ChEBI" id="CHEBI:30616"/>
    </ligand>
</feature>
<feature type="binding site" evidence="1">
    <location>
        <begin position="229"/>
        <end position="230"/>
    </location>
    <ligand>
        <name>ATP</name>
        <dbReference type="ChEBI" id="CHEBI:30616"/>
    </ligand>
</feature>
<feature type="binding site" evidence="1">
    <location>
        <position position="229"/>
    </location>
    <ligand>
        <name>a protein</name>
        <dbReference type="ChEBI" id="CHEBI:16541"/>
    </ligand>
    <ligandPart>
        <name>L-glutamate residue</name>
        <dbReference type="ChEBI" id="CHEBI:29973"/>
        <note>L-glutamate acceptor residue in protein target</note>
    </ligandPart>
</feature>
<feature type="binding site" evidence="1">
    <location>
        <begin position="251"/>
        <end position="254"/>
    </location>
    <ligand>
        <name>ATP</name>
        <dbReference type="ChEBI" id="CHEBI:30616"/>
    </ligand>
</feature>
<feature type="binding site" evidence="1">
    <location>
        <begin position="264"/>
        <end position="266"/>
    </location>
    <ligand>
        <name>ATP</name>
        <dbReference type="ChEBI" id="CHEBI:30616"/>
    </ligand>
</feature>
<feature type="binding site" evidence="1">
    <location>
        <position position="290"/>
    </location>
    <ligand>
        <name>L-glutamate</name>
        <dbReference type="ChEBI" id="CHEBI:29985"/>
    </ligand>
</feature>
<feature type="binding site" evidence="1">
    <location>
        <begin position="312"/>
        <end position="313"/>
    </location>
    <ligand>
        <name>ATP</name>
        <dbReference type="ChEBI" id="CHEBI:30616"/>
    </ligand>
</feature>
<feature type="binding site" evidence="1">
    <location>
        <position position="314"/>
    </location>
    <ligand>
        <name>L-glutamate</name>
        <dbReference type="ChEBI" id="CHEBI:29985"/>
    </ligand>
</feature>
<feature type="binding site" evidence="1">
    <location>
        <position position="315"/>
    </location>
    <ligand>
        <name>L-glutamate</name>
        <dbReference type="ChEBI" id="CHEBI:29985"/>
    </ligand>
</feature>
<feature type="binding site" evidence="1">
    <location>
        <position position="332"/>
    </location>
    <ligand>
        <name>L-glutamate</name>
        <dbReference type="ChEBI" id="CHEBI:29985"/>
    </ligand>
</feature>
<feature type="binding site" evidence="1">
    <location>
        <position position="395"/>
    </location>
    <ligand>
        <name>Mg(2+)</name>
        <dbReference type="ChEBI" id="CHEBI:18420"/>
        <label>1</label>
    </ligand>
</feature>
<feature type="binding site" evidence="1">
    <location>
        <position position="408"/>
    </location>
    <ligand>
        <name>Mg(2+)</name>
        <dbReference type="ChEBI" id="CHEBI:18420"/>
        <label>1</label>
    </ligand>
</feature>
<feature type="binding site" evidence="1">
    <location>
        <position position="408"/>
    </location>
    <ligand>
        <name>Mg(2+)</name>
        <dbReference type="ChEBI" id="CHEBI:18420"/>
        <label>2</label>
    </ligand>
</feature>
<feature type="binding site" evidence="1">
    <location>
        <position position="410"/>
    </location>
    <ligand>
        <name>Mg(2+)</name>
        <dbReference type="ChEBI" id="CHEBI:18420"/>
        <label>2</label>
    </ligand>
</feature>
<feature type="binding site" evidence="1">
    <location>
        <position position="411"/>
    </location>
    <ligand>
        <name>a protein</name>
        <dbReference type="ChEBI" id="CHEBI:16541"/>
    </ligand>
    <ligandPart>
        <name>L-glutamate residue</name>
        <dbReference type="ChEBI" id="CHEBI:29973"/>
        <note>L-glutamate acceptor residue in protein target</note>
    </ligandPart>
</feature>
<feature type="binding site" evidence="1">
    <location>
        <position position="426"/>
    </location>
    <ligand>
        <name>L-glutamate</name>
        <dbReference type="ChEBI" id="CHEBI:29985"/>
    </ligand>
</feature>
<feature type="site" description="Essential for specifying alpha-elongation versus initiation step of the polyglutamylase activity" evidence="1">
    <location>
        <position position="229"/>
    </location>
</feature>
<feature type="site" description="Important for specifying alpha-elongation versus initiation step of the polyglutamylase activity" evidence="1">
    <location>
        <position position="411"/>
    </location>
</feature>
<feature type="splice variant" id="VSP_052727" description="In isoform 2." evidence="12 14">
    <location>
        <begin position="1"/>
        <end position="322"/>
    </location>
</feature>
<feature type="splice variant" id="VSP_062191" description="In isoform 3." evidence="11">
    <location>
        <begin position="1"/>
        <end position="48"/>
    </location>
</feature>
<feature type="splice variant" id="VSP_062192" description="In isoform 4." evidence="15">
    <original>LVINLSSCRYESVRRAAQQYGFREGGEDDDWTLYWTDYSVSLERVMEMKSYQKINHFPGMSEICRKDLLARNMSR</original>
    <variation>MPLKNSRKRRFPCFKKALICPGNLVRLQYDSTILTYQDPTAACAFRFLFNISPCLAPFRLIDEGKLVHFLIHSFP</variation>
    <location>
        <begin position="109"/>
        <end position="183"/>
    </location>
</feature>
<feature type="splice variant" id="VSP_062193" description="In isoform 4." evidence="15">
    <location>
        <begin position="184"/>
        <end position="891"/>
    </location>
</feature>
<feature type="splice variant" id="VSP_052728" description="In isoform 2." evidence="12 14">
    <original>FSRDAHSGSK</original>
    <variation>MEGCLGVAEL</variation>
    <location>
        <begin position="323"/>
        <end position="332"/>
    </location>
</feature>
<feature type="sequence variant" id="VAR_039993" description="In dbSNP:rs2032844." evidence="6 8">
    <original>E</original>
    <variation>D</variation>
    <location>
        <position position="712"/>
    </location>
</feature>
<feature type="mutagenesis site" description="Decreased binding to microtubules and polyglutamylase activity; when associated with E-464 and E-467." evidence="10">
    <original>KKK</original>
    <variation>EEE</variation>
    <location>
        <begin position="444"/>
        <end position="446"/>
    </location>
</feature>
<feature type="mutagenesis site" description="Decreased binding to microtubules and polyglutamylase activity; when associated with 396-E--E-446 and E-467." evidence="10">
    <original>R</original>
    <variation>E</variation>
    <location>
        <position position="464"/>
    </location>
</feature>
<feature type="mutagenesis site" description="Decreased binding to microtubules and polyglutamylase activity; when associated with 396-E--E-446 and E-464." evidence="10">
    <original>R</original>
    <variation>E</variation>
    <location>
        <position position="467"/>
    </location>
</feature>
<feature type="sequence variant" id="VAR_082930" description="In dbSNP:rs17853181." evidence="8">
    <original>E</original>
    <variation>V</variation>
    <location sequence="Q8N841-2">
        <position position="9"/>
    </location>
</feature>
<reference key="1">
    <citation type="journal article" date="2006" name="Gene">
        <title>The testis-specific apoptosis related gene TTL.6 underwent adaptive evolution in the lineage leading to humans.</title>
        <authorList>
            <person name="Chen X.-H."/>
            <person name="Shi H."/>
            <person name="Liu X.-L."/>
            <person name="Su B."/>
        </authorList>
    </citation>
    <scope>NUCLEOTIDE SEQUENCE [GENOMIC DNA / MRNA] (ISOFORM 2)</scope>
    <scope>VARIANT ASP-712</scope>
</reference>
<reference key="2">
    <citation type="journal article" date="2004" name="Nat. Genet.">
        <title>Complete sequencing and characterization of 21,243 full-length human cDNAs.</title>
        <authorList>
            <person name="Ota T."/>
            <person name="Suzuki Y."/>
            <person name="Nishikawa T."/>
            <person name="Otsuki T."/>
            <person name="Sugiyama T."/>
            <person name="Irie R."/>
            <person name="Wakamatsu A."/>
            <person name="Hayashi K."/>
            <person name="Sato H."/>
            <person name="Nagai K."/>
            <person name="Kimura K."/>
            <person name="Makita H."/>
            <person name="Sekine M."/>
            <person name="Obayashi M."/>
            <person name="Nishi T."/>
            <person name="Shibahara T."/>
            <person name="Tanaka T."/>
            <person name="Ishii S."/>
            <person name="Yamamoto J."/>
            <person name="Saito K."/>
            <person name="Kawai Y."/>
            <person name="Isono Y."/>
            <person name="Nakamura Y."/>
            <person name="Nagahari K."/>
            <person name="Murakami K."/>
            <person name="Yasuda T."/>
            <person name="Iwayanagi T."/>
            <person name="Wagatsuma M."/>
            <person name="Shiratori A."/>
            <person name="Sudo H."/>
            <person name="Hosoiri T."/>
            <person name="Kaku Y."/>
            <person name="Kodaira H."/>
            <person name="Kondo H."/>
            <person name="Sugawara M."/>
            <person name="Takahashi M."/>
            <person name="Kanda K."/>
            <person name="Yokoi T."/>
            <person name="Furuya T."/>
            <person name="Kikkawa E."/>
            <person name="Omura Y."/>
            <person name="Abe K."/>
            <person name="Kamihara K."/>
            <person name="Katsuta N."/>
            <person name="Sato K."/>
            <person name="Tanikawa M."/>
            <person name="Yamazaki M."/>
            <person name="Ninomiya K."/>
            <person name="Ishibashi T."/>
            <person name="Yamashita H."/>
            <person name="Murakawa K."/>
            <person name="Fujimori K."/>
            <person name="Tanai H."/>
            <person name="Kimata M."/>
            <person name="Watanabe M."/>
            <person name="Hiraoka S."/>
            <person name="Chiba Y."/>
            <person name="Ishida S."/>
            <person name="Ono Y."/>
            <person name="Takiguchi S."/>
            <person name="Watanabe S."/>
            <person name="Yosida M."/>
            <person name="Hotuta T."/>
            <person name="Kusano J."/>
            <person name="Kanehori K."/>
            <person name="Takahashi-Fujii A."/>
            <person name="Hara H."/>
            <person name="Tanase T.-O."/>
            <person name="Nomura Y."/>
            <person name="Togiya S."/>
            <person name="Komai F."/>
            <person name="Hara R."/>
            <person name="Takeuchi K."/>
            <person name="Arita M."/>
            <person name="Imose N."/>
            <person name="Musashino K."/>
            <person name="Yuuki H."/>
            <person name="Oshima A."/>
            <person name="Sasaki N."/>
            <person name="Aotsuka S."/>
            <person name="Yoshikawa Y."/>
            <person name="Matsunawa H."/>
            <person name="Ichihara T."/>
            <person name="Shiohata N."/>
            <person name="Sano S."/>
            <person name="Moriya S."/>
            <person name="Momiyama H."/>
            <person name="Satoh N."/>
            <person name="Takami S."/>
            <person name="Terashima Y."/>
            <person name="Suzuki O."/>
            <person name="Nakagawa S."/>
            <person name="Senoh A."/>
            <person name="Mizoguchi H."/>
            <person name="Goto Y."/>
            <person name="Shimizu F."/>
            <person name="Wakebe H."/>
            <person name="Hishigaki H."/>
            <person name="Watanabe T."/>
            <person name="Sugiyama A."/>
            <person name="Takemoto M."/>
            <person name="Kawakami B."/>
            <person name="Yamazaki M."/>
            <person name="Watanabe K."/>
            <person name="Kumagai A."/>
            <person name="Itakura S."/>
            <person name="Fukuzumi Y."/>
            <person name="Fujimori Y."/>
            <person name="Komiyama M."/>
            <person name="Tashiro H."/>
            <person name="Tanigami A."/>
            <person name="Fujiwara T."/>
            <person name="Ono T."/>
            <person name="Yamada K."/>
            <person name="Fujii Y."/>
            <person name="Ozaki K."/>
            <person name="Hirao M."/>
            <person name="Ohmori Y."/>
            <person name="Kawabata A."/>
            <person name="Hikiji T."/>
            <person name="Kobatake N."/>
            <person name="Inagaki H."/>
            <person name="Ikema Y."/>
            <person name="Okamoto S."/>
            <person name="Okitani R."/>
            <person name="Kawakami T."/>
            <person name="Noguchi S."/>
            <person name="Itoh T."/>
            <person name="Shigeta K."/>
            <person name="Senba T."/>
            <person name="Matsumura K."/>
            <person name="Nakajima Y."/>
            <person name="Mizuno T."/>
            <person name="Morinaga M."/>
            <person name="Sasaki M."/>
            <person name="Togashi T."/>
            <person name="Oyama M."/>
            <person name="Hata H."/>
            <person name="Watanabe M."/>
            <person name="Komatsu T."/>
            <person name="Mizushima-Sugano J."/>
            <person name="Satoh T."/>
            <person name="Shirai Y."/>
            <person name="Takahashi Y."/>
            <person name="Nakagawa K."/>
            <person name="Okumura K."/>
            <person name="Nagase T."/>
            <person name="Nomura N."/>
            <person name="Kikuchi H."/>
            <person name="Masuho Y."/>
            <person name="Yamashita R."/>
            <person name="Nakai K."/>
            <person name="Yada T."/>
            <person name="Nakamura Y."/>
            <person name="Ohara O."/>
            <person name="Isogai T."/>
            <person name="Sugano S."/>
        </authorList>
    </citation>
    <scope>NUCLEOTIDE SEQUENCE [LARGE SCALE MRNA] (ISOFORM 3)</scope>
    <scope>VARIANT ASP-712</scope>
    <source>
        <tissue evidence="18">Testis</tissue>
    </source>
</reference>
<reference key="3">
    <citation type="journal article" date="2007" name="BMC Genomics">
        <title>The full-ORF clone resource of the German cDNA consortium.</title>
        <authorList>
            <person name="Bechtel S."/>
            <person name="Rosenfelder H."/>
            <person name="Duda A."/>
            <person name="Schmidt C.P."/>
            <person name="Ernst U."/>
            <person name="Wellenreuther R."/>
            <person name="Mehrle A."/>
            <person name="Schuster C."/>
            <person name="Bahr A."/>
            <person name="Bloecker H."/>
            <person name="Heubner D."/>
            <person name="Hoerlein A."/>
            <person name="Michel G."/>
            <person name="Wedler H."/>
            <person name="Koehrer K."/>
            <person name="Ottenwaelder B."/>
            <person name="Poustka A."/>
            <person name="Wiemann S."/>
            <person name="Schupp I."/>
        </authorList>
    </citation>
    <scope>NUCLEOTIDE SEQUENCE [LARGE SCALE MRNA] (ISOFORM 4)</scope>
    <source>
        <tissue>Testis</tissue>
    </source>
</reference>
<reference key="4">
    <citation type="journal article" date="2006" name="Nature">
        <title>DNA sequence of human chromosome 17 and analysis of rearrangement in the human lineage.</title>
        <authorList>
            <person name="Zody M.C."/>
            <person name="Garber M."/>
            <person name="Adams D.J."/>
            <person name="Sharpe T."/>
            <person name="Harrow J."/>
            <person name="Lupski J.R."/>
            <person name="Nicholson C."/>
            <person name="Searle S.M."/>
            <person name="Wilming L."/>
            <person name="Young S.K."/>
            <person name="Abouelleil A."/>
            <person name="Allen N.R."/>
            <person name="Bi W."/>
            <person name="Bloom T."/>
            <person name="Borowsky M.L."/>
            <person name="Bugalter B.E."/>
            <person name="Butler J."/>
            <person name="Chang J.L."/>
            <person name="Chen C.-K."/>
            <person name="Cook A."/>
            <person name="Corum B."/>
            <person name="Cuomo C.A."/>
            <person name="de Jong P.J."/>
            <person name="DeCaprio D."/>
            <person name="Dewar K."/>
            <person name="FitzGerald M."/>
            <person name="Gilbert J."/>
            <person name="Gibson R."/>
            <person name="Gnerre S."/>
            <person name="Goldstein S."/>
            <person name="Grafham D.V."/>
            <person name="Grocock R."/>
            <person name="Hafez N."/>
            <person name="Hagopian D.S."/>
            <person name="Hart E."/>
            <person name="Norman C.H."/>
            <person name="Humphray S."/>
            <person name="Jaffe D.B."/>
            <person name="Jones M."/>
            <person name="Kamal M."/>
            <person name="Khodiyar V.K."/>
            <person name="LaButti K."/>
            <person name="Laird G."/>
            <person name="Lehoczky J."/>
            <person name="Liu X."/>
            <person name="Lokyitsang T."/>
            <person name="Loveland J."/>
            <person name="Lui A."/>
            <person name="Macdonald P."/>
            <person name="Major J.E."/>
            <person name="Matthews L."/>
            <person name="Mauceli E."/>
            <person name="McCarroll S.A."/>
            <person name="Mihalev A.H."/>
            <person name="Mudge J."/>
            <person name="Nguyen C."/>
            <person name="Nicol R."/>
            <person name="O'Leary S.B."/>
            <person name="Osoegawa K."/>
            <person name="Schwartz D.C."/>
            <person name="Shaw-Smith C."/>
            <person name="Stankiewicz P."/>
            <person name="Steward C."/>
            <person name="Swarbreck D."/>
            <person name="Venkataraman V."/>
            <person name="Whittaker C.A."/>
            <person name="Yang X."/>
            <person name="Zimmer A.R."/>
            <person name="Bradley A."/>
            <person name="Hubbard T."/>
            <person name="Birren B.W."/>
            <person name="Rogers J."/>
            <person name="Lander E.S."/>
            <person name="Nusbaum C."/>
        </authorList>
    </citation>
    <scope>NUCLEOTIDE SEQUENCE [LARGE SCALE GENOMIC DNA]</scope>
</reference>
<reference key="5">
    <citation type="journal article" date="2004" name="Genome Res.">
        <title>The status, quality, and expansion of the NIH full-length cDNA project: the Mammalian Gene Collection (MGC).</title>
        <authorList>
            <consortium name="The MGC Project Team"/>
        </authorList>
    </citation>
    <scope>NUCLEOTIDE SEQUENCE [LARGE SCALE MRNA] (ISOFORM 2)</scope>
    <source>
        <tissue evidence="17">Testis</tissue>
    </source>
</reference>
<reference key="6">
    <citation type="journal article" date="2005" name="Science">
        <title>Tubulin polyglutamylase enzymes are members of the TTL domain protein family.</title>
        <authorList>
            <person name="Janke C."/>
            <person name="Rogowski K."/>
            <person name="Wloga D."/>
            <person name="Regnard C."/>
            <person name="Kajava A.V."/>
            <person name="Strub J.-M."/>
            <person name="Temurak N."/>
            <person name="van Dijk J."/>
            <person name="Boucher D."/>
            <person name="van Dorsselaer A."/>
            <person name="Suryavanshi S."/>
            <person name="Gaertig J."/>
            <person name="Edde B."/>
        </authorList>
    </citation>
    <scope>IDENTIFICATION</scope>
</reference>
<reference key="7">
    <citation type="journal article" date="2012" name="Nat. Genet.">
        <title>CEP41 is mutated in Joubert syndrome and is required for tubulin glutamylation at the cilium.</title>
        <authorList>
            <person name="Lee J.E."/>
            <person name="Silhavy J.L."/>
            <person name="Zaki M.S."/>
            <person name="Schroth J."/>
            <person name="Bielas S.L."/>
            <person name="Marsh S.E."/>
            <person name="Olvera J."/>
            <person name="Brancati F."/>
            <person name="Iannicelli M."/>
            <person name="Ikegami K."/>
            <person name="Schlossman A.M."/>
            <person name="Merriman B."/>
            <person name="Attie-Bitach T."/>
            <person name="Logan C.V."/>
            <person name="Glass I.A."/>
            <person name="Cluckey A."/>
            <person name="Louie C.M."/>
            <person name="Lee J.H."/>
            <person name="Raynes H.R."/>
            <person name="Rapin I."/>
            <person name="Castroviejo I.P."/>
            <person name="Setou M."/>
            <person name="Barbot C."/>
            <person name="Boltshauser E."/>
            <person name="Nelson S.F."/>
            <person name="Hildebrandt F."/>
            <person name="Johnson C.A."/>
            <person name="Doherty D.A."/>
            <person name="Valente E.M."/>
            <person name="Gleeson J.G."/>
        </authorList>
    </citation>
    <scope>SUBCELLULAR LOCATION</scope>
    <scope>INTERACTION WITH CEP41</scope>
</reference>
<reference key="8">
    <citation type="journal article" date="2015" name="Cell">
        <title>Multivalent microtubule recognition by tubulin tyrosine ligase-like family glutamylases.</title>
        <authorList>
            <person name="Garnham C.P."/>
            <person name="Vemu A."/>
            <person name="Wilson-Kubalek E.M."/>
            <person name="Yu I."/>
            <person name="Szyk A."/>
            <person name="Lander G.C."/>
            <person name="Milligan R.A."/>
            <person name="Roll-Mecak A."/>
        </authorList>
    </citation>
    <scope>DOMAIN</scope>
    <scope>MUTAGENESIS OF 444-LYS--LYS-446; ARG-464 AND ARG-467</scope>
</reference>
<protein>
    <recommendedName>
        <fullName evidence="13">Tubulin polyglutamylase TTLL6</fullName>
        <ecNumber evidence="1">6.3.2.-</ecNumber>
    </recommendedName>
    <alternativeName>
        <fullName evidence="1">Protein polyglutamylase TTLL6</fullName>
    </alternativeName>
    <alternativeName>
        <fullName>Tubulin--tyrosine ligase-like protein 6</fullName>
    </alternativeName>
</protein>
<comment type="function">
    <text evidence="1">Polyglutamylase which modifies both tubulin and non-tubulin proteins, generating alpha-linked polyglutamate side chains on the gamma-carboxyl group of specific glutamate residues of target proteins. Preferentially mediates ATP-dependent long polyglutamate chain elongation over the initiation step of the polyglutamylation reaction. Preferentially modifies the alpha-tubulin tail over a beta-tail. Promotes tubulin polyglutamylation which stimulates spastin/SPAST-mediated microtubule severing, thereby regulating microtubule functions. Mediates microtubule polyglutamylation in primary cilia axoneme, which is important for ciliary structural formation and motility. Mediates microtubule polyglutamylation in motile cilia, necessary for the regulation of ciliary coordinated beating. Polyglutamylates non-tubulin protein nucleotidyltransferase CGAS, leading to CGAS DNA-binding inhibition, thereby preventing antiviral defense response.</text>
</comment>
<comment type="catalytic activity">
    <reaction evidence="1">
        <text>L-glutamyl-[protein] + L-glutamate + ATP = gamma-L-glutamyl-L-glutamyl-[protein] + ADP + phosphate + H(+)</text>
        <dbReference type="Rhea" id="RHEA:60144"/>
        <dbReference type="Rhea" id="RHEA-COMP:10208"/>
        <dbReference type="Rhea" id="RHEA-COMP:15517"/>
        <dbReference type="ChEBI" id="CHEBI:15378"/>
        <dbReference type="ChEBI" id="CHEBI:29973"/>
        <dbReference type="ChEBI" id="CHEBI:29985"/>
        <dbReference type="ChEBI" id="CHEBI:30616"/>
        <dbReference type="ChEBI" id="CHEBI:43474"/>
        <dbReference type="ChEBI" id="CHEBI:143622"/>
        <dbReference type="ChEBI" id="CHEBI:456216"/>
    </reaction>
    <physiologicalReaction direction="left-to-right" evidence="1">
        <dbReference type="Rhea" id="RHEA:60145"/>
    </physiologicalReaction>
</comment>
<comment type="catalytic activity">
    <reaction evidence="1">
        <text>(L-glutamyl)(n)-gamma-L-glutamyl-L-glutamyl-[protein] + L-glutamate + ATP = (L-glutamyl)(n+1)-gamma-L-glutamyl-L-glutamyl-[protein] + ADP + phosphate + H(+)</text>
        <dbReference type="Rhea" id="RHEA:60148"/>
        <dbReference type="Rhea" id="RHEA-COMP:15519"/>
        <dbReference type="Rhea" id="RHEA-COMP:15675"/>
        <dbReference type="ChEBI" id="CHEBI:15378"/>
        <dbReference type="ChEBI" id="CHEBI:29985"/>
        <dbReference type="ChEBI" id="CHEBI:30616"/>
        <dbReference type="ChEBI" id="CHEBI:43474"/>
        <dbReference type="ChEBI" id="CHEBI:143623"/>
        <dbReference type="ChEBI" id="CHEBI:456216"/>
    </reaction>
    <physiologicalReaction direction="left-to-right" evidence="1">
        <dbReference type="Rhea" id="RHEA:60149"/>
    </physiologicalReaction>
</comment>
<comment type="cofactor">
    <cofactor evidence="1">
        <name>Mg(2+)</name>
        <dbReference type="ChEBI" id="CHEBI:18420"/>
    </cofactor>
</comment>
<comment type="subunit">
    <text evidence="9">Found in a complex with CEP41.</text>
</comment>
<comment type="subcellular location">
    <subcellularLocation>
        <location evidence="1">Cytoplasm</location>
    </subcellularLocation>
    <subcellularLocation>
        <location evidence="1">Cytoplasm</location>
        <location evidence="1">Cytoskeleton</location>
    </subcellularLocation>
    <subcellularLocation>
        <location evidence="9">Cytoplasm</location>
        <location evidence="9">Cytoskeleton</location>
        <location evidence="9">Cilium axoneme</location>
    </subcellularLocation>
    <subcellularLocation>
        <location evidence="9">Cytoplasm</location>
        <location evidence="9">Cytoskeleton</location>
        <location evidence="9">Cilium basal body</location>
    </subcellularLocation>
    <text evidence="9">CEP41 is required for its transport between the basal body and the cilium axoneme.</text>
</comment>
<comment type="alternative products">
    <event type="alternative splicing"/>
    <isoform>
        <id>Q8N841-1</id>
        <name evidence="6">1</name>
        <sequence type="displayed"/>
    </isoform>
    <isoform>
        <id>Q8N841-2</id>
        <name evidence="7 8">2</name>
        <sequence type="described" ref="VSP_052727 VSP_052728"/>
    </isoform>
    <isoform>
        <id>Q8N841-3</id>
        <name>3</name>
        <sequence type="described" ref="VSP_062191"/>
    </isoform>
    <isoform>
        <id>Q8N841-4</id>
        <name>4</name>
        <sequence type="described" ref="VSP_062192 VSP_062193"/>
    </isoform>
</comment>
<comment type="domain">
    <text evidence="2 10">The flexible c-MTBD (cationic microtubule binding domain) region mediates binding to microtubules. It is positively charged and becomes ordered when bound to microtubules: it interacts with a negatively charged patch on tubulin. The presence of positive charges in the c-MTBD region is essential for proper binding.</text>
</comment>
<comment type="domain">
    <text evidence="1">Gln-181 is the main determinant for regioselectivity, which segregates between initiases and elongases in all tubulin--tyrosine ligase family. A glutamine residue at this position is found in elongases TTLL6, TTLL9, TTLL11, TTLL13, TTLL10 and favors glutamate-chain elongation, whereas an arginine residue is found in initiases TTLL2, TTLL4, TTLL5, TTLL3, TTLL8 and favors initiation.</text>
</comment>
<comment type="similarity">
    <text evidence="3">Belongs to the tubulin--tyrosine ligase family.</text>
</comment>
<comment type="sequence caution" evidence="16">
    <conflict type="erroneous initiation">
        <sequence resource="EMBL-CDS" id="BAC04066"/>
    </conflict>
    <text>Truncated N-terminus.</text>
</comment>
<comment type="sequence caution" evidence="16">
    <conflict type="erroneous initiation">
        <sequence resource="EMBL-CDS" id="CAH56366"/>
    </conflict>
    <text>Extended N-terminus.</text>
</comment>
<dbReference type="EC" id="6.3.2.-" evidence="1"/>
<dbReference type="EMBL" id="AY898275">
    <property type="protein sequence ID" value="AAY28091.1"/>
    <property type="molecule type" value="Genomic_DNA"/>
</dbReference>
<dbReference type="EMBL" id="AY898276">
    <property type="protein sequence ID" value="AAY28092.1"/>
    <property type="molecule type" value="Genomic_DNA"/>
</dbReference>
<dbReference type="EMBL" id="AY898277">
    <property type="protein sequence ID" value="AAY28093.1"/>
    <property type="molecule type" value="Genomic_DNA"/>
</dbReference>
<dbReference type="EMBL" id="AY898278">
    <property type="protein sequence ID" value="AAY28094.1"/>
    <property type="molecule type" value="Genomic_DNA"/>
</dbReference>
<dbReference type="EMBL" id="AY898279">
    <property type="protein sequence ID" value="AAY28095.1"/>
    <property type="molecule type" value="Genomic_DNA"/>
</dbReference>
<dbReference type="EMBL" id="AY898280">
    <property type="protein sequence ID" value="AAY28096.1"/>
    <property type="molecule type" value="Genomic_DNA"/>
</dbReference>
<dbReference type="EMBL" id="AY898281">
    <property type="protein sequence ID" value="AAY28097.1"/>
    <property type="molecule type" value="Genomic_DNA"/>
</dbReference>
<dbReference type="EMBL" id="AY898282">
    <property type="protein sequence ID" value="AAY28098.1"/>
    <property type="molecule type" value="Genomic_DNA"/>
</dbReference>
<dbReference type="EMBL" id="AY898283">
    <property type="protein sequence ID" value="AAY28099.1"/>
    <property type="molecule type" value="Genomic_DNA"/>
</dbReference>
<dbReference type="EMBL" id="AY898284">
    <property type="protein sequence ID" value="AAY28100.1"/>
    <property type="molecule type" value="Genomic_DNA"/>
</dbReference>
<dbReference type="EMBL" id="AY898285">
    <property type="protein sequence ID" value="AAY28101.1"/>
    <property type="molecule type" value="Genomic_DNA"/>
</dbReference>
<dbReference type="EMBL" id="AY898286">
    <property type="protein sequence ID" value="AAY28102.1"/>
    <property type="molecule type" value="Genomic_DNA"/>
</dbReference>
<dbReference type="EMBL" id="AY898287">
    <property type="protein sequence ID" value="AAY28103.1"/>
    <property type="molecule type" value="Genomic_DNA"/>
</dbReference>
<dbReference type="EMBL" id="AY898288">
    <property type="protein sequence ID" value="AAY28104.1"/>
    <property type="molecule type" value="Genomic_DNA"/>
</dbReference>
<dbReference type="EMBL" id="AY898289">
    <property type="protein sequence ID" value="AAY28105.1"/>
    <property type="molecule type" value="Genomic_DNA"/>
</dbReference>
<dbReference type="EMBL" id="AY898290">
    <property type="protein sequence ID" value="AAY28106.1"/>
    <property type="molecule type" value="Genomic_DNA"/>
</dbReference>
<dbReference type="EMBL" id="AY898291">
    <property type="protein sequence ID" value="AAY28107.1"/>
    <property type="molecule type" value="Genomic_DNA"/>
</dbReference>
<dbReference type="EMBL" id="AY898292">
    <property type="protein sequence ID" value="AAY28108.1"/>
    <property type="molecule type" value="Genomic_DNA"/>
</dbReference>
<dbReference type="EMBL" id="AY898293">
    <property type="protein sequence ID" value="AAY28109.1"/>
    <property type="molecule type" value="Genomic_DNA"/>
</dbReference>
<dbReference type="EMBL" id="AY898294">
    <property type="protein sequence ID" value="AAY28110.1"/>
    <property type="molecule type" value="Genomic_DNA"/>
</dbReference>
<dbReference type="EMBL" id="AY898295">
    <property type="protein sequence ID" value="AAY28111.1"/>
    <property type="molecule type" value="Genomic_DNA"/>
</dbReference>
<dbReference type="EMBL" id="AY898296">
    <property type="protein sequence ID" value="AAY28112.1"/>
    <property type="molecule type" value="Genomic_DNA"/>
</dbReference>
<dbReference type="EMBL" id="AY898297">
    <property type="protein sequence ID" value="AAY28113.1"/>
    <property type="molecule type" value="Genomic_DNA"/>
</dbReference>
<dbReference type="EMBL" id="AY898298">
    <property type="protein sequence ID" value="AAY28114.1"/>
    <property type="molecule type" value="Genomic_DNA"/>
</dbReference>
<dbReference type="EMBL" id="AY898299">
    <property type="protein sequence ID" value="AAY28115.1"/>
    <property type="molecule type" value="Genomic_DNA"/>
</dbReference>
<dbReference type="EMBL" id="AY898300">
    <property type="protein sequence ID" value="AAY28116.1"/>
    <property type="molecule type" value="Genomic_DNA"/>
</dbReference>
<dbReference type="EMBL" id="AY898301">
    <property type="protein sequence ID" value="AAY28117.1"/>
    <property type="molecule type" value="Genomic_DNA"/>
</dbReference>
<dbReference type="EMBL" id="AY898302">
    <property type="protein sequence ID" value="AAY28118.1"/>
    <property type="molecule type" value="Genomic_DNA"/>
</dbReference>
<dbReference type="EMBL" id="AY898303">
    <property type="protein sequence ID" value="AAY28119.1"/>
    <property type="molecule type" value="Genomic_DNA"/>
</dbReference>
<dbReference type="EMBL" id="AY898304">
    <property type="protein sequence ID" value="AAY28120.1"/>
    <property type="molecule type" value="Genomic_DNA"/>
</dbReference>
<dbReference type="EMBL" id="AY898305">
    <property type="protein sequence ID" value="AAY28121.1"/>
    <property type="molecule type" value="Genomic_DNA"/>
</dbReference>
<dbReference type="EMBL" id="AY898306">
    <property type="protein sequence ID" value="AAY28122.1"/>
    <property type="molecule type" value="Genomic_DNA"/>
</dbReference>
<dbReference type="EMBL" id="AY898307">
    <property type="protein sequence ID" value="AAY28123.1"/>
    <property type="molecule type" value="Genomic_DNA"/>
</dbReference>
<dbReference type="EMBL" id="AY898308">
    <property type="protein sequence ID" value="AAY28124.1"/>
    <property type="molecule type" value="Genomic_DNA"/>
</dbReference>
<dbReference type="EMBL" id="AY898309">
    <property type="protein sequence ID" value="AAY28125.1"/>
    <property type="molecule type" value="Genomic_DNA"/>
</dbReference>
<dbReference type="EMBL" id="AY898317">
    <property type="protein sequence ID" value="AAX86172.1"/>
    <property type="molecule type" value="Genomic_DNA"/>
</dbReference>
<dbReference type="EMBL" id="AY898318">
    <property type="protein sequence ID" value="AAX86173.1"/>
    <property type="molecule type" value="Genomic_DNA"/>
</dbReference>
<dbReference type="EMBL" id="AY898319">
    <property type="protein sequence ID" value="AAX86174.1"/>
    <property type="molecule type" value="Genomic_DNA"/>
</dbReference>
<dbReference type="EMBL" id="AY898320">
    <property type="protein sequence ID" value="AAX86175.1"/>
    <property type="molecule type" value="Genomic_DNA"/>
</dbReference>
<dbReference type="EMBL" id="AY898321">
    <property type="protein sequence ID" value="AAX86176.1"/>
    <property type="molecule type" value="Genomic_DNA"/>
</dbReference>
<dbReference type="EMBL" id="AY898322">
    <property type="protein sequence ID" value="AAX86177.1"/>
    <property type="molecule type" value="Genomic_DNA"/>
</dbReference>
<dbReference type="EMBL" id="AY898323">
    <property type="protein sequence ID" value="AAX86178.1"/>
    <property type="molecule type" value="Genomic_DNA"/>
</dbReference>
<dbReference type="EMBL" id="AY898324">
    <property type="protein sequence ID" value="AAX86179.1"/>
    <property type="molecule type" value="Genomic_DNA"/>
</dbReference>
<dbReference type="EMBL" id="AY898325">
    <property type="protein sequence ID" value="AAX86180.1"/>
    <property type="molecule type" value="Genomic_DNA"/>
</dbReference>
<dbReference type="EMBL" id="AY898326">
    <property type="protein sequence ID" value="AAX86181.1"/>
    <property type="molecule type" value="Genomic_DNA"/>
</dbReference>
<dbReference type="EMBL" id="AY898327">
    <property type="protein sequence ID" value="AAX86182.1"/>
    <property type="molecule type" value="Genomic_DNA"/>
</dbReference>
<dbReference type="EMBL" id="AY898328">
    <property type="protein sequence ID" value="AAX86183.1"/>
    <property type="molecule type" value="Genomic_DNA"/>
</dbReference>
<dbReference type="EMBL" id="AY898329">
    <property type="protein sequence ID" value="AAX86184.1"/>
    <property type="molecule type" value="Genomic_DNA"/>
</dbReference>
<dbReference type="EMBL" id="AY898330">
    <property type="protein sequence ID" value="AAX86185.1"/>
    <property type="molecule type" value="Genomic_DNA"/>
</dbReference>
<dbReference type="EMBL" id="AY898331">
    <property type="protein sequence ID" value="AAX86186.1"/>
    <property type="molecule type" value="Genomic_DNA"/>
</dbReference>
<dbReference type="EMBL" id="AY898332">
    <property type="protein sequence ID" value="AAX86187.1"/>
    <property type="molecule type" value="Genomic_DNA"/>
</dbReference>
<dbReference type="EMBL" id="AY898333">
    <property type="protein sequence ID" value="AAX86188.1"/>
    <property type="molecule type" value="Genomic_DNA"/>
</dbReference>
<dbReference type="EMBL" id="AY898334">
    <property type="protein sequence ID" value="AAX86189.1"/>
    <property type="molecule type" value="Genomic_DNA"/>
</dbReference>
<dbReference type="EMBL" id="AY898335">
    <property type="protein sequence ID" value="AAX86190.1"/>
    <property type="molecule type" value="Genomic_DNA"/>
</dbReference>
<dbReference type="EMBL" id="AY898336">
    <property type="protein sequence ID" value="AAX86191.1"/>
    <property type="molecule type" value="Genomic_DNA"/>
</dbReference>
<dbReference type="EMBL" id="AY898337">
    <property type="protein sequence ID" value="AAX86192.1"/>
    <property type="molecule type" value="Genomic_DNA"/>
</dbReference>
<dbReference type="EMBL" id="AY898338">
    <property type="protein sequence ID" value="AAX86193.1"/>
    <property type="molecule type" value="Genomic_DNA"/>
</dbReference>
<dbReference type="EMBL" id="AY898339">
    <property type="protein sequence ID" value="AAX86194.1"/>
    <property type="molecule type" value="Genomic_DNA"/>
</dbReference>
<dbReference type="EMBL" id="AY898340">
    <property type="protein sequence ID" value="AAX86195.1"/>
    <property type="molecule type" value="Genomic_DNA"/>
</dbReference>
<dbReference type="EMBL" id="AY898341">
    <property type="protein sequence ID" value="AAX86196.1"/>
    <property type="molecule type" value="Genomic_DNA"/>
</dbReference>
<dbReference type="EMBL" id="AY898342">
    <property type="protein sequence ID" value="AAX86197.1"/>
    <property type="molecule type" value="Genomic_DNA"/>
</dbReference>
<dbReference type="EMBL" id="AY898343">
    <property type="protein sequence ID" value="AAX86198.1"/>
    <property type="molecule type" value="Genomic_DNA"/>
</dbReference>
<dbReference type="EMBL" id="AY898344">
    <property type="protein sequence ID" value="AAX86199.1"/>
    <property type="molecule type" value="Genomic_DNA"/>
</dbReference>
<dbReference type="EMBL" id="AY898345">
    <property type="protein sequence ID" value="AAX86200.1"/>
    <property type="molecule type" value="Genomic_DNA"/>
</dbReference>
<dbReference type="EMBL" id="AY898346">
    <property type="protein sequence ID" value="AAX86201.1"/>
    <property type="molecule type" value="Genomic_DNA"/>
</dbReference>
<dbReference type="EMBL" id="AY898347">
    <property type="protein sequence ID" value="AAX86202.1"/>
    <property type="molecule type" value="Genomic_DNA"/>
</dbReference>
<dbReference type="EMBL" id="AY898348">
    <property type="protein sequence ID" value="AAX86203.1"/>
    <property type="molecule type" value="Genomic_DNA"/>
</dbReference>
<dbReference type="EMBL" id="AY898349">
    <property type="protein sequence ID" value="AAX86204.1"/>
    <property type="molecule type" value="Genomic_DNA"/>
</dbReference>
<dbReference type="EMBL" id="AY898350">
    <property type="protein sequence ID" value="AAX86205.1"/>
    <property type="molecule type" value="Genomic_DNA"/>
</dbReference>
<dbReference type="EMBL" id="AY898351">
    <property type="protein sequence ID" value="AAX86206.1"/>
    <property type="molecule type" value="Genomic_DNA"/>
</dbReference>
<dbReference type="EMBL" id="AY898359">
    <property type="protein sequence ID" value="AAX86214.1"/>
    <property type="molecule type" value="Genomic_DNA"/>
</dbReference>
<dbReference type="EMBL" id="AY898360">
    <property type="protein sequence ID" value="AAX86215.1"/>
    <property type="molecule type" value="Genomic_DNA"/>
</dbReference>
<dbReference type="EMBL" id="AY898361">
    <property type="protein sequence ID" value="AAX86216.1"/>
    <property type="molecule type" value="Genomic_DNA"/>
</dbReference>
<dbReference type="EMBL" id="AY898362">
    <property type="protein sequence ID" value="AAX86217.1"/>
    <property type="molecule type" value="Genomic_DNA"/>
</dbReference>
<dbReference type="EMBL" id="AY898363">
    <property type="protein sequence ID" value="AAX86218.1"/>
    <property type="molecule type" value="Genomic_DNA"/>
</dbReference>
<dbReference type="EMBL" id="AY898364">
    <property type="protein sequence ID" value="AAX86219.1"/>
    <property type="molecule type" value="Genomic_DNA"/>
</dbReference>
<dbReference type="EMBL" id="AY898365">
    <property type="protein sequence ID" value="AAX86220.1"/>
    <property type="molecule type" value="Genomic_DNA"/>
</dbReference>
<dbReference type="EMBL" id="AY898366">
    <property type="protein sequence ID" value="AAX86221.1"/>
    <property type="molecule type" value="Genomic_DNA"/>
</dbReference>
<dbReference type="EMBL" id="AY898367">
    <property type="protein sequence ID" value="AAX86222.1"/>
    <property type="molecule type" value="Genomic_DNA"/>
</dbReference>
<dbReference type="EMBL" id="AY898368">
    <property type="protein sequence ID" value="AAX86223.1"/>
    <property type="molecule type" value="Genomic_DNA"/>
</dbReference>
<dbReference type="EMBL" id="AY898369">
    <property type="protein sequence ID" value="AAX86224.1"/>
    <property type="molecule type" value="Genomic_DNA"/>
</dbReference>
<dbReference type="EMBL" id="AY898370">
    <property type="protein sequence ID" value="AAX86225.1"/>
    <property type="molecule type" value="Genomic_DNA"/>
</dbReference>
<dbReference type="EMBL" id="AY898371">
    <property type="protein sequence ID" value="AAX86226.1"/>
    <property type="molecule type" value="Genomic_DNA"/>
</dbReference>
<dbReference type="EMBL" id="AY898372">
    <property type="protein sequence ID" value="AAX86227.1"/>
    <property type="molecule type" value="Genomic_DNA"/>
</dbReference>
<dbReference type="EMBL" id="AY898373">
    <property type="protein sequence ID" value="AAX86228.1"/>
    <property type="molecule type" value="Genomic_DNA"/>
</dbReference>
<dbReference type="EMBL" id="AY898374">
    <property type="protein sequence ID" value="AAX86229.1"/>
    <property type="molecule type" value="Genomic_DNA"/>
</dbReference>
<dbReference type="EMBL" id="AY898375">
    <property type="protein sequence ID" value="AAX86230.1"/>
    <property type="molecule type" value="Genomic_DNA"/>
</dbReference>
<dbReference type="EMBL" id="AY898376">
    <property type="protein sequence ID" value="AAX86231.1"/>
    <property type="molecule type" value="Genomic_DNA"/>
</dbReference>
<dbReference type="EMBL" id="AY898377">
    <property type="protein sequence ID" value="AAX86232.1"/>
    <property type="molecule type" value="Genomic_DNA"/>
</dbReference>
<dbReference type="EMBL" id="AY898378">
    <property type="protein sequence ID" value="AAX86233.1"/>
    <property type="molecule type" value="Genomic_DNA"/>
</dbReference>
<dbReference type="EMBL" id="AY898379">
    <property type="protein sequence ID" value="AAX86234.1"/>
    <property type="molecule type" value="Genomic_DNA"/>
</dbReference>
<dbReference type="EMBL" id="AY898380">
    <property type="protein sequence ID" value="AAX86235.1"/>
    <property type="molecule type" value="Genomic_DNA"/>
</dbReference>
<dbReference type="EMBL" id="AY898381">
    <property type="protein sequence ID" value="AAX86236.1"/>
    <property type="molecule type" value="Genomic_DNA"/>
</dbReference>
<dbReference type="EMBL" id="AY898382">
    <property type="protein sequence ID" value="AAX86237.1"/>
    <property type="molecule type" value="Genomic_DNA"/>
</dbReference>
<dbReference type="EMBL" id="AY898383">
    <property type="protein sequence ID" value="AAX86238.1"/>
    <property type="molecule type" value="Genomic_DNA"/>
</dbReference>
<dbReference type="EMBL" id="AY898384">
    <property type="protein sequence ID" value="AAX86239.1"/>
    <property type="molecule type" value="Genomic_DNA"/>
</dbReference>
<dbReference type="EMBL" id="AY898385">
    <property type="protein sequence ID" value="AAX86240.1"/>
    <property type="molecule type" value="Genomic_DNA"/>
</dbReference>
<dbReference type="EMBL" id="AY898386">
    <property type="protein sequence ID" value="AAX86241.1"/>
    <property type="molecule type" value="Genomic_DNA"/>
</dbReference>
<dbReference type="EMBL" id="AY898387">
    <property type="protein sequence ID" value="AAX86242.1"/>
    <property type="molecule type" value="Genomic_DNA"/>
</dbReference>
<dbReference type="EMBL" id="AY898388">
    <property type="protein sequence ID" value="AAX86243.1"/>
    <property type="molecule type" value="Genomic_DNA"/>
</dbReference>
<dbReference type="EMBL" id="AY898389">
    <property type="protein sequence ID" value="AAX86244.1"/>
    <property type="molecule type" value="Genomic_DNA"/>
</dbReference>
<dbReference type="EMBL" id="AY898390">
    <property type="protein sequence ID" value="AAX86245.1"/>
    <property type="molecule type" value="Genomic_DNA"/>
</dbReference>
<dbReference type="EMBL" id="AY898391">
    <property type="protein sequence ID" value="AAX86246.1"/>
    <property type="molecule type" value="Genomic_DNA"/>
</dbReference>
<dbReference type="EMBL" id="AY898392">
    <property type="protein sequence ID" value="AAX86247.1"/>
    <property type="molecule type" value="Genomic_DNA"/>
</dbReference>
<dbReference type="EMBL" id="AY898393">
    <property type="protein sequence ID" value="AAX86248.1"/>
    <property type="molecule type" value="Genomic_DNA"/>
</dbReference>
<dbReference type="EMBL" id="AY898401">
    <property type="protein sequence ID" value="AAX86256.1"/>
    <property type="molecule type" value="Genomic_DNA"/>
</dbReference>
<dbReference type="EMBL" id="AY898402">
    <property type="protein sequence ID" value="AAX86257.1"/>
    <property type="molecule type" value="Genomic_DNA"/>
</dbReference>
<dbReference type="EMBL" id="AY898403">
    <property type="protein sequence ID" value="AAX86258.1"/>
    <property type="molecule type" value="Genomic_DNA"/>
</dbReference>
<dbReference type="EMBL" id="AY898404">
    <property type="protein sequence ID" value="AAX86259.1"/>
    <property type="molecule type" value="Genomic_DNA"/>
</dbReference>
<dbReference type="EMBL" id="AY898405">
    <property type="protein sequence ID" value="AAX86260.1"/>
    <property type="molecule type" value="Genomic_DNA"/>
</dbReference>
<dbReference type="EMBL" id="AY898406">
    <property type="protein sequence ID" value="AAX86261.1"/>
    <property type="molecule type" value="Genomic_DNA"/>
</dbReference>
<dbReference type="EMBL" id="AY898407">
    <property type="protein sequence ID" value="AAX86262.1"/>
    <property type="molecule type" value="Genomic_DNA"/>
</dbReference>
<dbReference type="EMBL" id="AY898408">
    <property type="protein sequence ID" value="AAX86263.1"/>
    <property type="molecule type" value="Genomic_DNA"/>
</dbReference>
<dbReference type="EMBL" id="AY898409">
    <property type="protein sequence ID" value="AAX86264.1"/>
    <property type="molecule type" value="Genomic_DNA"/>
</dbReference>
<dbReference type="EMBL" id="AY898410">
    <property type="protein sequence ID" value="AAX86265.1"/>
    <property type="molecule type" value="Genomic_DNA"/>
</dbReference>
<dbReference type="EMBL" id="AY898411">
    <property type="protein sequence ID" value="AAX86266.1"/>
    <property type="molecule type" value="Genomic_DNA"/>
</dbReference>
<dbReference type="EMBL" id="AY898412">
    <property type="protein sequence ID" value="AAX86267.1"/>
    <property type="molecule type" value="Genomic_DNA"/>
</dbReference>
<dbReference type="EMBL" id="AY898413">
    <property type="protein sequence ID" value="AAX86268.1"/>
    <property type="molecule type" value="Genomic_DNA"/>
</dbReference>
<dbReference type="EMBL" id="AY898414">
    <property type="protein sequence ID" value="AAX86269.1"/>
    <property type="molecule type" value="Genomic_DNA"/>
</dbReference>
<dbReference type="EMBL" id="AY898415">
    <property type="protein sequence ID" value="AAX86270.1"/>
    <property type="molecule type" value="Genomic_DNA"/>
</dbReference>
<dbReference type="EMBL" id="AY898416">
    <property type="protein sequence ID" value="AAX86271.1"/>
    <property type="molecule type" value="Genomic_DNA"/>
</dbReference>
<dbReference type="EMBL" id="AY898417">
    <property type="protein sequence ID" value="AAX86272.1"/>
    <property type="molecule type" value="Genomic_DNA"/>
</dbReference>
<dbReference type="EMBL" id="AY898418">
    <property type="protein sequence ID" value="AAX86273.1"/>
    <property type="molecule type" value="Genomic_DNA"/>
</dbReference>
<dbReference type="EMBL" id="AY898419">
    <property type="protein sequence ID" value="AAX86274.1"/>
    <property type="molecule type" value="Genomic_DNA"/>
</dbReference>
<dbReference type="EMBL" id="AY898420">
    <property type="protein sequence ID" value="AAX86275.1"/>
    <property type="molecule type" value="Genomic_DNA"/>
</dbReference>
<dbReference type="EMBL" id="AY898421">
    <property type="protein sequence ID" value="AAX86276.1"/>
    <property type="molecule type" value="Genomic_DNA"/>
</dbReference>
<dbReference type="EMBL" id="AY898422">
    <property type="protein sequence ID" value="AAX86277.1"/>
    <property type="molecule type" value="Genomic_DNA"/>
</dbReference>
<dbReference type="EMBL" id="AY898423">
    <property type="protein sequence ID" value="AAX86278.1"/>
    <property type="molecule type" value="Genomic_DNA"/>
</dbReference>
<dbReference type="EMBL" id="AY898424">
    <property type="protein sequence ID" value="AAX86279.1"/>
    <property type="molecule type" value="Genomic_DNA"/>
</dbReference>
<dbReference type="EMBL" id="AY898425">
    <property type="protein sequence ID" value="AAX86280.1"/>
    <property type="molecule type" value="Genomic_DNA"/>
</dbReference>
<dbReference type="EMBL" id="AY898426">
    <property type="protein sequence ID" value="AAX86281.1"/>
    <property type="molecule type" value="Genomic_DNA"/>
</dbReference>
<dbReference type="EMBL" id="AY898427">
    <property type="protein sequence ID" value="AAX86282.1"/>
    <property type="molecule type" value="Genomic_DNA"/>
</dbReference>
<dbReference type="EMBL" id="AY898428">
    <property type="protein sequence ID" value="AAX86283.1"/>
    <property type="molecule type" value="Genomic_DNA"/>
</dbReference>
<dbReference type="EMBL" id="AY898429">
    <property type="protein sequence ID" value="AAX86284.1"/>
    <property type="molecule type" value="Genomic_DNA"/>
</dbReference>
<dbReference type="EMBL" id="AY898430">
    <property type="protein sequence ID" value="AAX86285.1"/>
    <property type="molecule type" value="Genomic_DNA"/>
</dbReference>
<dbReference type="EMBL" id="AY898431">
    <property type="protein sequence ID" value="AAX86286.1"/>
    <property type="molecule type" value="Genomic_DNA"/>
</dbReference>
<dbReference type="EMBL" id="AY898432">
    <property type="protein sequence ID" value="AAX86287.1"/>
    <property type="molecule type" value="Genomic_DNA"/>
</dbReference>
<dbReference type="EMBL" id="AY898433">
    <property type="protein sequence ID" value="AAX86288.1"/>
    <property type="molecule type" value="Genomic_DNA"/>
</dbReference>
<dbReference type="EMBL" id="AY898434">
    <property type="protein sequence ID" value="AAX86289.1"/>
    <property type="molecule type" value="Genomic_DNA"/>
</dbReference>
<dbReference type="EMBL" id="AY898435">
    <property type="protein sequence ID" value="AAX86290.1"/>
    <property type="molecule type" value="Genomic_DNA"/>
</dbReference>
<dbReference type="EMBL" id="AY898443">
    <property type="protein sequence ID" value="AAX86298.1"/>
    <property type="molecule type" value="Genomic_DNA"/>
</dbReference>
<dbReference type="EMBL" id="AY898444">
    <property type="protein sequence ID" value="AAX86299.1"/>
    <property type="molecule type" value="Genomic_DNA"/>
</dbReference>
<dbReference type="EMBL" id="AY898445">
    <property type="protein sequence ID" value="AAX86300.1"/>
    <property type="molecule type" value="Genomic_DNA"/>
</dbReference>
<dbReference type="EMBL" id="AY898446">
    <property type="protein sequence ID" value="AAX86301.1"/>
    <property type="molecule type" value="Genomic_DNA"/>
</dbReference>
<dbReference type="EMBL" id="AY898447">
    <property type="protein sequence ID" value="AAX86302.1"/>
    <property type="molecule type" value="Genomic_DNA"/>
</dbReference>
<dbReference type="EMBL" id="AY898448">
    <property type="protein sequence ID" value="AAX86303.1"/>
    <property type="molecule type" value="Genomic_DNA"/>
</dbReference>
<dbReference type="EMBL" id="AY898449">
    <property type="protein sequence ID" value="AAX86304.1"/>
    <property type="molecule type" value="Genomic_DNA"/>
</dbReference>
<dbReference type="EMBL" id="AY898450">
    <property type="protein sequence ID" value="AAX86305.1"/>
    <property type="molecule type" value="Genomic_DNA"/>
</dbReference>
<dbReference type="EMBL" id="AY898451">
    <property type="protein sequence ID" value="AAX86306.1"/>
    <property type="molecule type" value="Genomic_DNA"/>
</dbReference>
<dbReference type="EMBL" id="AY898452">
    <property type="protein sequence ID" value="AAX86307.1"/>
    <property type="molecule type" value="Genomic_DNA"/>
</dbReference>
<dbReference type="EMBL" id="AY898453">
    <property type="protein sequence ID" value="AAX86308.1"/>
    <property type="molecule type" value="Genomic_DNA"/>
</dbReference>
<dbReference type="EMBL" id="AY898454">
    <property type="protein sequence ID" value="AAX86309.1"/>
    <property type="molecule type" value="Genomic_DNA"/>
</dbReference>
<dbReference type="EMBL" id="AY898455">
    <property type="protein sequence ID" value="AAX86310.1"/>
    <property type="molecule type" value="Genomic_DNA"/>
</dbReference>
<dbReference type="EMBL" id="AY898456">
    <property type="protein sequence ID" value="AAX86311.1"/>
    <property type="molecule type" value="Genomic_DNA"/>
</dbReference>
<dbReference type="EMBL" id="AY898457">
    <property type="protein sequence ID" value="AAX86312.1"/>
    <property type="molecule type" value="Genomic_DNA"/>
</dbReference>
<dbReference type="EMBL" id="AY898458">
    <property type="protein sequence ID" value="AAX86313.1"/>
    <property type="molecule type" value="Genomic_DNA"/>
</dbReference>
<dbReference type="EMBL" id="AY898459">
    <property type="protein sequence ID" value="AAX86314.1"/>
    <property type="molecule type" value="Genomic_DNA"/>
</dbReference>
<dbReference type="EMBL" id="AY898460">
    <property type="protein sequence ID" value="AAX86315.1"/>
    <property type="molecule type" value="Genomic_DNA"/>
</dbReference>
<dbReference type="EMBL" id="AY898461">
    <property type="protein sequence ID" value="AAX86316.1"/>
    <property type="molecule type" value="Genomic_DNA"/>
</dbReference>
<dbReference type="EMBL" id="AY898462">
    <property type="protein sequence ID" value="AAX86317.1"/>
    <property type="molecule type" value="Genomic_DNA"/>
</dbReference>
<dbReference type="EMBL" id="AY898463">
    <property type="protein sequence ID" value="AAX86318.1"/>
    <property type="molecule type" value="Genomic_DNA"/>
</dbReference>
<dbReference type="EMBL" id="AY898464">
    <property type="protein sequence ID" value="AAX86319.1"/>
    <property type="molecule type" value="Genomic_DNA"/>
</dbReference>
<dbReference type="EMBL" id="AY898465">
    <property type="protein sequence ID" value="AAX86320.1"/>
    <property type="molecule type" value="Genomic_DNA"/>
</dbReference>
<dbReference type="EMBL" id="AY898466">
    <property type="protein sequence ID" value="AAX86321.1"/>
    <property type="molecule type" value="Genomic_DNA"/>
</dbReference>
<dbReference type="EMBL" id="AY898467">
    <property type="protein sequence ID" value="AAX86322.1"/>
    <property type="molecule type" value="Genomic_DNA"/>
</dbReference>
<dbReference type="EMBL" id="AY898468">
    <property type="protein sequence ID" value="AAX86323.1"/>
    <property type="molecule type" value="Genomic_DNA"/>
</dbReference>
<dbReference type="EMBL" id="AY898469">
    <property type="protein sequence ID" value="AAX86324.1"/>
    <property type="molecule type" value="Genomic_DNA"/>
</dbReference>
<dbReference type="EMBL" id="AY898470">
    <property type="protein sequence ID" value="AAX86325.1"/>
    <property type="molecule type" value="Genomic_DNA"/>
</dbReference>
<dbReference type="EMBL" id="AY898471">
    <property type="protein sequence ID" value="AAX86326.1"/>
    <property type="molecule type" value="Genomic_DNA"/>
</dbReference>
<dbReference type="EMBL" id="AY898472">
    <property type="protein sequence ID" value="AAX86327.1"/>
    <property type="molecule type" value="Genomic_DNA"/>
</dbReference>
<dbReference type="EMBL" id="AY898473">
    <property type="protein sequence ID" value="AAX86328.1"/>
    <property type="molecule type" value="Genomic_DNA"/>
</dbReference>
<dbReference type="EMBL" id="AY898474">
    <property type="protein sequence ID" value="AAX86329.1"/>
    <property type="molecule type" value="Genomic_DNA"/>
</dbReference>
<dbReference type="EMBL" id="AY898475">
    <property type="protein sequence ID" value="AAX86330.1"/>
    <property type="molecule type" value="Genomic_DNA"/>
</dbReference>
<dbReference type="EMBL" id="AY898476">
    <property type="protein sequence ID" value="AAX86331.1"/>
    <property type="molecule type" value="Genomic_DNA"/>
</dbReference>
<dbReference type="EMBL" id="AY898477">
    <property type="protein sequence ID" value="AAX86332.1"/>
    <property type="molecule type" value="Genomic_DNA"/>
</dbReference>
<dbReference type="EMBL" id="AY898485">
    <property type="protein sequence ID" value="AAX86340.1"/>
    <property type="molecule type" value="Genomic_DNA"/>
</dbReference>
<dbReference type="EMBL" id="AY898486">
    <property type="protein sequence ID" value="AAX86341.1"/>
    <property type="molecule type" value="Genomic_DNA"/>
</dbReference>
<dbReference type="EMBL" id="AY898487">
    <property type="protein sequence ID" value="AAX86342.1"/>
    <property type="molecule type" value="Genomic_DNA"/>
</dbReference>
<dbReference type="EMBL" id="AY898488">
    <property type="protein sequence ID" value="AAX86343.1"/>
    <property type="molecule type" value="Genomic_DNA"/>
</dbReference>
<dbReference type="EMBL" id="AY898489">
    <property type="protein sequence ID" value="AAX86344.1"/>
    <property type="molecule type" value="Genomic_DNA"/>
</dbReference>
<dbReference type="EMBL" id="AY898490">
    <property type="protein sequence ID" value="AAX86345.1"/>
    <property type="molecule type" value="Genomic_DNA"/>
</dbReference>
<dbReference type="EMBL" id="AY898491">
    <property type="protein sequence ID" value="AAX86346.1"/>
    <property type="molecule type" value="Genomic_DNA"/>
</dbReference>
<dbReference type="EMBL" id="AY898492">
    <property type="protein sequence ID" value="AAX86347.1"/>
    <property type="molecule type" value="Genomic_DNA"/>
</dbReference>
<dbReference type="EMBL" id="AY898493">
    <property type="protein sequence ID" value="AAX86348.1"/>
    <property type="molecule type" value="Genomic_DNA"/>
</dbReference>
<dbReference type="EMBL" id="AY898494">
    <property type="protein sequence ID" value="AAX86349.1"/>
    <property type="molecule type" value="Genomic_DNA"/>
</dbReference>
<dbReference type="EMBL" id="AY898495">
    <property type="protein sequence ID" value="AAX86350.1"/>
    <property type="molecule type" value="Genomic_DNA"/>
</dbReference>
<dbReference type="EMBL" id="AY898496">
    <property type="protein sequence ID" value="AAX86351.1"/>
    <property type="molecule type" value="Genomic_DNA"/>
</dbReference>
<dbReference type="EMBL" id="AY898497">
    <property type="protein sequence ID" value="AAX86352.1"/>
    <property type="molecule type" value="Genomic_DNA"/>
</dbReference>
<dbReference type="EMBL" id="AY898498">
    <property type="protein sequence ID" value="AAX86353.1"/>
    <property type="molecule type" value="Genomic_DNA"/>
</dbReference>
<dbReference type="EMBL" id="AY898499">
    <property type="protein sequence ID" value="AAX86354.1"/>
    <property type="molecule type" value="Genomic_DNA"/>
</dbReference>
<dbReference type="EMBL" id="AY898500">
    <property type="protein sequence ID" value="AAX86355.1"/>
    <property type="molecule type" value="Genomic_DNA"/>
</dbReference>
<dbReference type="EMBL" id="AY898501">
    <property type="protein sequence ID" value="AAX86356.1"/>
    <property type="molecule type" value="Genomic_DNA"/>
</dbReference>
<dbReference type="EMBL" id="AY898502">
    <property type="protein sequence ID" value="AAX86357.1"/>
    <property type="molecule type" value="Genomic_DNA"/>
</dbReference>
<dbReference type="EMBL" id="AY898503">
    <property type="protein sequence ID" value="AAX86358.1"/>
    <property type="molecule type" value="Genomic_DNA"/>
</dbReference>
<dbReference type="EMBL" id="AY898504">
    <property type="protein sequence ID" value="AAX86359.1"/>
    <property type="molecule type" value="Genomic_DNA"/>
</dbReference>
<dbReference type="EMBL" id="AY898505">
    <property type="protein sequence ID" value="AAX86360.1"/>
    <property type="molecule type" value="Genomic_DNA"/>
</dbReference>
<dbReference type="EMBL" id="AY898506">
    <property type="protein sequence ID" value="AAX86361.1"/>
    <property type="molecule type" value="Genomic_DNA"/>
</dbReference>
<dbReference type="EMBL" id="AY898507">
    <property type="protein sequence ID" value="AAX86362.1"/>
    <property type="molecule type" value="Genomic_DNA"/>
</dbReference>
<dbReference type="EMBL" id="AY898508">
    <property type="protein sequence ID" value="AAX86363.1"/>
    <property type="molecule type" value="Genomic_DNA"/>
</dbReference>
<dbReference type="EMBL" id="AY898509">
    <property type="protein sequence ID" value="AAX86364.1"/>
    <property type="molecule type" value="Genomic_DNA"/>
</dbReference>
<dbReference type="EMBL" id="AY898510">
    <property type="protein sequence ID" value="AAX86365.1"/>
    <property type="molecule type" value="Genomic_DNA"/>
</dbReference>
<dbReference type="EMBL" id="AY898511">
    <property type="protein sequence ID" value="AAX86366.1"/>
    <property type="molecule type" value="Genomic_DNA"/>
</dbReference>
<dbReference type="EMBL" id="AY898512">
    <property type="protein sequence ID" value="AAX86367.1"/>
    <property type="molecule type" value="Genomic_DNA"/>
</dbReference>
<dbReference type="EMBL" id="AY898513">
    <property type="protein sequence ID" value="AAX86368.1"/>
    <property type="molecule type" value="Genomic_DNA"/>
</dbReference>
<dbReference type="EMBL" id="AY898514">
    <property type="protein sequence ID" value="AAX86369.1"/>
    <property type="molecule type" value="Genomic_DNA"/>
</dbReference>
<dbReference type="EMBL" id="AY898515">
    <property type="protein sequence ID" value="AAX86370.1"/>
    <property type="molecule type" value="Genomic_DNA"/>
</dbReference>
<dbReference type="EMBL" id="AY898516">
    <property type="protein sequence ID" value="AAX86371.1"/>
    <property type="molecule type" value="Genomic_DNA"/>
</dbReference>
<dbReference type="EMBL" id="AY898517">
    <property type="protein sequence ID" value="AAX86372.1"/>
    <property type="molecule type" value="Genomic_DNA"/>
</dbReference>
<dbReference type="EMBL" id="AY898518">
    <property type="protein sequence ID" value="AAX86373.1"/>
    <property type="molecule type" value="Genomic_DNA"/>
</dbReference>
<dbReference type="EMBL" id="AY898519">
    <property type="protein sequence ID" value="AAX86374.1"/>
    <property type="molecule type" value="Genomic_DNA"/>
</dbReference>
<dbReference type="EMBL" id="AY898527">
    <property type="protein sequence ID" value="AAX86382.1"/>
    <property type="molecule type" value="Genomic_DNA"/>
</dbReference>
<dbReference type="EMBL" id="AY898528">
    <property type="protein sequence ID" value="AAX86383.1"/>
    <property type="molecule type" value="Genomic_DNA"/>
</dbReference>
<dbReference type="EMBL" id="AY898529">
    <property type="protein sequence ID" value="AAX86384.1"/>
    <property type="molecule type" value="Genomic_DNA"/>
</dbReference>
<dbReference type="EMBL" id="AY898530">
    <property type="protein sequence ID" value="AAX86385.1"/>
    <property type="molecule type" value="Genomic_DNA"/>
</dbReference>
<dbReference type="EMBL" id="AY898531">
    <property type="protein sequence ID" value="AAX86386.1"/>
    <property type="molecule type" value="Genomic_DNA"/>
</dbReference>
<dbReference type="EMBL" id="AY898532">
    <property type="protein sequence ID" value="AAX86387.1"/>
    <property type="molecule type" value="Genomic_DNA"/>
</dbReference>
<dbReference type="EMBL" id="AY898533">
    <property type="protein sequence ID" value="AAX86388.1"/>
    <property type="molecule type" value="Genomic_DNA"/>
</dbReference>
<dbReference type="EMBL" id="AY898534">
    <property type="protein sequence ID" value="AAX86389.1"/>
    <property type="molecule type" value="Genomic_DNA"/>
</dbReference>
<dbReference type="EMBL" id="AY898535">
    <property type="protein sequence ID" value="AAX86390.1"/>
    <property type="molecule type" value="Genomic_DNA"/>
</dbReference>
<dbReference type="EMBL" id="AY898536">
    <property type="protein sequence ID" value="AAX86391.1"/>
    <property type="molecule type" value="Genomic_DNA"/>
</dbReference>
<dbReference type="EMBL" id="AY898537">
    <property type="protein sequence ID" value="AAX86392.1"/>
    <property type="molecule type" value="Genomic_DNA"/>
</dbReference>
<dbReference type="EMBL" id="AY898538">
    <property type="protein sequence ID" value="AAX86393.1"/>
    <property type="molecule type" value="Genomic_DNA"/>
</dbReference>
<dbReference type="EMBL" id="AY898539">
    <property type="protein sequence ID" value="AAX86394.1"/>
    <property type="molecule type" value="Genomic_DNA"/>
</dbReference>
<dbReference type="EMBL" id="AY898540">
    <property type="protein sequence ID" value="AAX86395.1"/>
    <property type="molecule type" value="Genomic_DNA"/>
</dbReference>
<dbReference type="EMBL" id="AY898541">
    <property type="protein sequence ID" value="AAX86396.1"/>
    <property type="molecule type" value="Genomic_DNA"/>
</dbReference>
<dbReference type="EMBL" id="AY898542">
    <property type="protein sequence ID" value="AAX86397.1"/>
    <property type="molecule type" value="Genomic_DNA"/>
</dbReference>
<dbReference type="EMBL" id="AY898543">
    <property type="protein sequence ID" value="AAX86398.1"/>
    <property type="molecule type" value="Genomic_DNA"/>
</dbReference>
<dbReference type="EMBL" id="AY898544">
    <property type="protein sequence ID" value="AAX86399.1"/>
    <property type="molecule type" value="Genomic_DNA"/>
</dbReference>
<dbReference type="EMBL" id="AY898545">
    <property type="protein sequence ID" value="AAX86400.1"/>
    <property type="molecule type" value="Genomic_DNA"/>
</dbReference>
<dbReference type="EMBL" id="AY898546">
    <property type="protein sequence ID" value="AAX86401.1"/>
    <property type="molecule type" value="Genomic_DNA"/>
</dbReference>
<dbReference type="EMBL" id="AY898547">
    <property type="protein sequence ID" value="AAX86402.1"/>
    <property type="molecule type" value="Genomic_DNA"/>
</dbReference>
<dbReference type="EMBL" id="AY898548">
    <property type="protein sequence ID" value="AAX86403.1"/>
    <property type="molecule type" value="Genomic_DNA"/>
</dbReference>
<dbReference type="EMBL" id="AY898549">
    <property type="protein sequence ID" value="AAX86404.1"/>
    <property type="molecule type" value="Genomic_DNA"/>
</dbReference>
<dbReference type="EMBL" id="AY898550">
    <property type="protein sequence ID" value="AAX86405.1"/>
    <property type="molecule type" value="Genomic_DNA"/>
</dbReference>
<dbReference type="EMBL" id="AY898551">
    <property type="protein sequence ID" value="AAX86406.1"/>
    <property type="molecule type" value="Genomic_DNA"/>
</dbReference>
<dbReference type="EMBL" id="AY898552">
    <property type="protein sequence ID" value="AAX86407.1"/>
    <property type="molecule type" value="Genomic_DNA"/>
</dbReference>
<dbReference type="EMBL" id="AY898553">
    <property type="protein sequence ID" value="AAX86408.1"/>
    <property type="molecule type" value="Genomic_DNA"/>
</dbReference>
<dbReference type="EMBL" id="AY898554">
    <property type="protein sequence ID" value="AAX86409.1"/>
    <property type="molecule type" value="Genomic_DNA"/>
</dbReference>
<dbReference type="EMBL" id="AY898555">
    <property type="protein sequence ID" value="AAX86410.1"/>
    <property type="molecule type" value="Genomic_DNA"/>
</dbReference>
<dbReference type="EMBL" id="AY898556">
    <property type="protein sequence ID" value="AAX86411.1"/>
    <property type="molecule type" value="Genomic_DNA"/>
</dbReference>
<dbReference type="EMBL" id="AY898557">
    <property type="protein sequence ID" value="AAX86412.1"/>
    <property type="molecule type" value="Genomic_DNA"/>
</dbReference>
<dbReference type="EMBL" id="AY898558">
    <property type="protein sequence ID" value="AAX86413.1"/>
    <property type="molecule type" value="Genomic_DNA"/>
</dbReference>
<dbReference type="EMBL" id="AY898559">
    <property type="protein sequence ID" value="AAX86414.1"/>
    <property type="molecule type" value="Genomic_DNA"/>
</dbReference>
<dbReference type="EMBL" id="AY898560">
    <property type="protein sequence ID" value="AAX86415.1"/>
    <property type="molecule type" value="Genomic_DNA"/>
</dbReference>
<dbReference type="EMBL" id="AY898561">
    <property type="protein sequence ID" value="AAX86416.1"/>
    <property type="molecule type" value="Genomic_DNA"/>
</dbReference>
<dbReference type="EMBL" id="AY898569">
    <property type="protein sequence ID" value="AAX86424.1"/>
    <property type="molecule type" value="Genomic_DNA"/>
</dbReference>
<dbReference type="EMBL" id="AY898570">
    <property type="protein sequence ID" value="AAX86425.1"/>
    <property type="molecule type" value="Genomic_DNA"/>
</dbReference>
<dbReference type="EMBL" id="AY898571">
    <property type="protein sequence ID" value="AAX86426.1"/>
    <property type="molecule type" value="Genomic_DNA"/>
</dbReference>
<dbReference type="EMBL" id="AY898572">
    <property type="protein sequence ID" value="AAX86427.1"/>
    <property type="molecule type" value="Genomic_DNA"/>
</dbReference>
<dbReference type="EMBL" id="AY898573">
    <property type="protein sequence ID" value="AAX86428.1"/>
    <property type="molecule type" value="Genomic_DNA"/>
</dbReference>
<dbReference type="EMBL" id="AY898574">
    <property type="protein sequence ID" value="AAX86429.1"/>
    <property type="molecule type" value="Genomic_DNA"/>
</dbReference>
<dbReference type="EMBL" id="AY898575">
    <property type="protein sequence ID" value="AAX86430.1"/>
    <property type="molecule type" value="Genomic_DNA"/>
</dbReference>
<dbReference type="EMBL" id="AY898576">
    <property type="protein sequence ID" value="AAX86431.1"/>
    <property type="molecule type" value="Genomic_DNA"/>
</dbReference>
<dbReference type="EMBL" id="AY898577">
    <property type="protein sequence ID" value="AAX86432.1"/>
    <property type="molecule type" value="Genomic_DNA"/>
</dbReference>
<dbReference type="EMBL" id="AY898578">
    <property type="protein sequence ID" value="AAX86433.1"/>
    <property type="molecule type" value="Genomic_DNA"/>
</dbReference>
<dbReference type="EMBL" id="AY898579">
    <property type="protein sequence ID" value="AAX86434.1"/>
    <property type="molecule type" value="Genomic_DNA"/>
</dbReference>
<dbReference type="EMBL" id="AY898580">
    <property type="protein sequence ID" value="AAX86435.1"/>
    <property type="molecule type" value="Genomic_DNA"/>
</dbReference>
<dbReference type="EMBL" id="AY898581">
    <property type="protein sequence ID" value="AAX86436.1"/>
    <property type="molecule type" value="Genomic_DNA"/>
</dbReference>
<dbReference type="EMBL" id="AY898582">
    <property type="protein sequence ID" value="AAX86437.1"/>
    <property type="molecule type" value="Genomic_DNA"/>
</dbReference>
<dbReference type="EMBL" id="AY898583">
    <property type="protein sequence ID" value="AAX86438.1"/>
    <property type="molecule type" value="Genomic_DNA"/>
</dbReference>
<dbReference type="EMBL" id="AY898584">
    <property type="protein sequence ID" value="AAX86439.1"/>
    <property type="molecule type" value="Genomic_DNA"/>
</dbReference>
<dbReference type="EMBL" id="AY898585">
    <property type="protein sequence ID" value="AAX86440.1"/>
    <property type="molecule type" value="Genomic_DNA"/>
</dbReference>
<dbReference type="EMBL" id="AY898586">
    <property type="protein sequence ID" value="AAX86441.1"/>
    <property type="molecule type" value="Genomic_DNA"/>
</dbReference>
<dbReference type="EMBL" id="AY898587">
    <property type="protein sequence ID" value="AAX86442.1"/>
    <property type="molecule type" value="Genomic_DNA"/>
</dbReference>
<dbReference type="EMBL" id="AY898588">
    <property type="protein sequence ID" value="AAX86443.1"/>
    <property type="molecule type" value="Genomic_DNA"/>
</dbReference>
<dbReference type="EMBL" id="AY898589">
    <property type="protein sequence ID" value="AAX86444.1"/>
    <property type="molecule type" value="Genomic_DNA"/>
</dbReference>
<dbReference type="EMBL" id="AY898590">
    <property type="protein sequence ID" value="AAX86445.1"/>
    <property type="molecule type" value="Genomic_DNA"/>
</dbReference>
<dbReference type="EMBL" id="AY898591">
    <property type="protein sequence ID" value="AAX86446.1"/>
    <property type="molecule type" value="Genomic_DNA"/>
</dbReference>
<dbReference type="EMBL" id="AY898592">
    <property type="protein sequence ID" value="AAX86447.1"/>
    <property type="molecule type" value="Genomic_DNA"/>
</dbReference>
<dbReference type="EMBL" id="AY898593">
    <property type="protein sequence ID" value="AAX86448.1"/>
    <property type="molecule type" value="Genomic_DNA"/>
</dbReference>
<dbReference type="EMBL" id="AY898594">
    <property type="protein sequence ID" value="AAX86449.1"/>
    <property type="molecule type" value="Genomic_DNA"/>
</dbReference>
<dbReference type="EMBL" id="AY898595">
    <property type="protein sequence ID" value="AAX86450.1"/>
    <property type="molecule type" value="Genomic_DNA"/>
</dbReference>
<dbReference type="EMBL" id="AY898596">
    <property type="protein sequence ID" value="AAX86451.1"/>
    <property type="molecule type" value="Genomic_DNA"/>
</dbReference>
<dbReference type="EMBL" id="AY898597">
    <property type="protein sequence ID" value="AAX86452.1"/>
    <property type="molecule type" value="Genomic_DNA"/>
</dbReference>
<dbReference type="EMBL" id="AY898598">
    <property type="protein sequence ID" value="AAX86453.1"/>
    <property type="molecule type" value="Genomic_DNA"/>
</dbReference>
<dbReference type="EMBL" id="AY898599">
    <property type="protein sequence ID" value="AAX86454.1"/>
    <property type="molecule type" value="Genomic_DNA"/>
</dbReference>
<dbReference type="EMBL" id="AY898600">
    <property type="protein sequence ID" value="AAX86455.1"/>
    <property type="molecule type" value="Genomic_DNA"/>
</dbReference>
<dbReference type="EMBL" id="AY898601">
    <property type="protein sequence ID" value="AAX86456.1"/>
    <property type="molecule type" value="Genomic_DNA"/>
</dbReference>
<dbReference type="EMBL" id="AY898602">
    <property type="protein sequence ID" value="AAX86457.1"/>
    <property type="molecule type" value="Genomic_DNA"/>
</dbReference>
<dbReference type="EMBL" id="AY898603">
    <property type="protein sequence ID" value="AAX86458.1"/>
    <property type="molecule type" value="Genomic_DNA"/>
</dbReference>
<dbReference type="EMBL" id="AK093127">
    <property type="protein sequence ID" value="BAC04066.1"/>
    <property type="status" value="ALT_INIT"/>
    <property type="molecule type" value="mRNA"/>
</dbReference>
<dbReference type="EMBL" id="AK302952">
    <property type="protein sequence ID" value="BAG64107.1"/>
    <property type="molecule type" value="mRNA"/>
</dbReference>
<dbReference type="EMBL" id="AL834151">
    <property type="protein sequence ID" value="CAH56366.1"/>
    <property type="status" value="ALT_INIT"/>
    <property type="molecule type" value="mRNA"/>
</dbReference>
<dbReference type="EMBL" id="AC068531">
    <property type="status" value="NOT_ANNOTATED_CDS"/>
    <property type="molecule type" value="Genomic_DNA"/>
</dbReference>
<dbReference type="EMBL" id="BC033563">
    <property type="protein sequence ID" value="AAH33563.1"/>
    <property type="molecule type" value="mRNA"/>
</dbReference>
<dbReference type="CCDS" id="CCDS45724.1">
    <molecule id="Q8N841-1"/>
</dbReference>
<dbReference type="RefSeq" id="NP_001124390.1">
    <molecule id="Q8N841-1"/>
    <property type="nucleotide sequence ID" value="NM_001130918.3"/>
</dbReference>
<dbReference type="RefSeq" id="NP_775894.2">
    <property type="nucleotide sequence ID" value="NM_173623.3"/>
</dbReference>
<dbReference type="SMR" id="Q8N841"/>
<dbReference type="BioGRID" id="129751">
    <property type="interactions" value="15"/>
</dbReference>
<dbReference type="FunCoup" id="Q8N841">
    <property type="interactions" value="83"/>
</dbReference>
<dbReference type="IntAct" id="Q8N841">
    <property type="interactions" value="5"/>
</dbReference>
<dbReference type="MINT" id="Q8N841"/>
<dbReference type="STRING" id="9606.ENSP00000377043"/>
<dbReference type="iPTMnet" id="Q8N841"/>
<dbReference type="PhosphoSitePlus" id="Q8N841"/>
<dbReference type="BioMuta" id="TTLL6"/>
<dbReference type="DMDM" id="172045779"/>
<dbReference type="jPOST" id="Q8N841"/>
<dbReference type="MassIVE" id="Q8N841"/>
<dbReference type="PaxDb" id="9606-ENSP00000377043"/>
<dbReference type="PeptideAtlas" id="Q8N841"/>
<dbReference type="ProteomicsDB" id="72370">
    <molecule id="Q8N841-1"/>
</dbReference>
<dbReference type="ProteomicsDB" id="72371">
    <molecule id="Q8N841-2"/>
</dbReference>
<dbReference type="Antibodypedia" id="17865">
    <property type="antibodies" value="41 antibodies from 12 providers"/>
</dbReference>
<dbReference type="DNASU" id="284076"/>
<dbReference type="Ensembl" id="ENST00000393382.8">
    <molecule id="Q8N841-1"/>
    <property type="protein sequence ID" value="ENSP00000377043.3"/>
    <property type="gene ID" value="ENSG00000170703.16"/>
</dbReference>
<dbReference type="GeneID" id="284076"/>
<dbReference type="KEGG" id="hsa:284076"/>
<dbReference type="MANE-Select" id="ENST00000393382.8">
    <property type="protein sequence ID" value="ENSP00000377043.3"/>
    <property type="RefSeq nucleotide sequence ID" value="NM_001130918.3"/>
    <property type="RefSeq protein sequence ID" value="NP_001124390.1"/>
</dbReference>
<dbReference type="UCSC" id="uc002iob.4">
    <molecule id="Q8N841-1"/>
    <property type="organism name" value="human"/>
</dbReference>
<dbReference type="AGR" id="HGNC:26664"/>
<dbReference type="CTD" id="284076"/>
<dbReference type="DisGeNET" id="284076"/>
<dbReference type="GeneCards" id="TTLL6"/>
<dbReference type="HGNC" id="HGNC:26664">
    <property type="gene designation" value="TTLL6"/>
</dbReference>
<dbReference type="HPA" id="ENSG00000170703">
    <property type="expression patterns" value="Tissue enhanced (choroid plexus, testis)"/>
</dbReference>
<dbReference type="MIM" id="610849">
    <property type="type" value="gene"/>
</dbReference>
<dbReference type="neXtProt" id="NX_Q8N841"/>
<dbReference type="OpenTargets" id="ENSG00000170703"/>
<dbReference type="PharmGKB" id="PA143485662"/>
<dbReference type="VEuPathDB" id="HostDB:ENSG00000170703"/>
<dbReference type="eggNOG" id="KOG2158">
    <property type="taxonomic scope" value="Eukaryota"/>
</dbReference>
<dbReference type="GeneTree" id="ENSGT00940000161434"/>
<dbReference type="HOGENOM" id="CLU_036158_0_0_1"/>
<dbReference type="InParanoid" id="Q8N841"/>
<dbReference type="OMA" id="LFPAHYN"/>
<dbReference type="OrthoDB" id="202825at2759"/>
<dbReference type="PAN-GO" id="Q8N841">
    <property type="GO annotations" value="5 GO annotations based on evolutionary models"/>
</dbReference>
<dbReference type="PhylomeDB" id="Q8N841"/>
<dbReference type="TreeFam" id="TF313087"/>
<dbReference type="PathwayCommons" id="Q8N841"/>
<dbReference type="Reactome" id="R-HSA-8955332">
    <property type="pathway name" value="Carboxyterminal post-translational modifications of tubulin"/>
</dbReference>
<dbReference type="SignaLink" id="Q8N841"/>
<dbReference type="BioGRID-ORCS" id="284076">
    <property type="hits" value="19 hits in 1139 CRISPR screens"/>
</dbReference>
<dbReference type="ChiTaRS" id="TTLL6">
    <property type="organism name" value="human"/>
</dbReference>
<dbReference type="GenomeRNAi" id="284076"/>
<dbReference type="Pharos" id="Q8N841">
    <property type="development level" value="Tdark"/>
</dbReference>
<dbReference type="PRO" id="PR:Q8N841"/>
<dbReference type="Proteomes" id="UP000005640">
    <property type="component" value="Chromosome 17"/>
</dbReference>
<dbReference type="RNAct" id="Q8N841">
    <property type="molecule type" value="protein"/>
</dbReference>
<dbReference type="Bgee" id="ENSG00000170703">
    <property type="expression patterns" value="Expressed in sperm and 122 other cell types or tissues"/>
</dbReference>
<dbReference type="ExpressionAtlas" id="Q8N841">
    <property type="expression patterns" value="baseline and differential"/>
</dbReference>
<dbReference type="GO" id="GO:0097731">
    <property type="term" value="C:9+0 non-motile cilium"/>
    <property type="evidence" value="ECO:0007669"/>
    <property type="project" value="Ensembl"/>
</dbReference>
<dbReference type="GO" id="GO:0036064">
    <property type="term" value="C:ciliary basal body"/>
    <property type="evidence" value="ECO:0000314"/>
    <property type="project" value="UniProtKB"/>
</dbReference>
<dbReference type="GO" id="GO:0005929">
    <property type="term" value="C:cilium"/>
    <property type="evidence" value="ECO:0000314"/>
    <property type="project" value="HPA"/>
</dbReference>
<dbReference type="GO" id="GO:0005829">
    <property type="term" value="C:cytosol"/>
    <property type="evidence" value="ECO:0000304"/>
    <property type="project" value="Reactome"/>
</dbReference>
<dbReference type="GO" id="GO:0005874">
    <property type="term" value="C:microtubule"/>
    <property type="evidence" value="ECO:0007669"/>
    <property type="project" value="UniProtKB-KW"/>
</dbReference>
<dbReference type="GO" id="GO:0015630">
    <property type="term" value="C:microtubule cytoskeleton"/>
    <property type="evidence" value="ECO:0000314"/>
    <property type="project" value="HPA"/>
</dbReference>
<dbReference type="GO" id="GO:0005524">
    <property type="term" value="F:ATP binding"/>
    <property type="evidence" value="ECO:0007669"/>
    <property type="project" value="UniProtKB-KW"/>
</dbReference>
<dbReference type="GO" id="GO:0046872">
    <property type="term" value="F:metal ion binding"/>
    <property type="evidence" value="ECO:0007669"/>
    <property type="project" value="UniProtKB-KW"/>
</dbReference>
<dbReference type="GO" id="GO:0070739">
    <property type="term" value="F:protein-glutamic acid ligase activity"/>
    <property type="evidence" value="ECO:0000250"/>
    <property type="project" value="UniProtKB"/>
</dbReference>
<dbReference type="GO" id="GO:0106438">
    <property type="term" value="F:protein-glutamic acid ligase activity, elongating"/>
    <property type="evidence" value="ECO:0007669"/>
    <property type="project" value="RHEA"/>
</dbReference>
<dbReference type="GO" id="GO:0106437">
    <property type="term" value="F:protein-glutamic acid ligase activity, initiating"/>
    <property type="evidence" value="ECO:0007669"/>
    <property type="project" value="RHEA"/>
</dbReference>
<dbReference type="GO" id="GO:0015631">
    <property type="term" value="F:tubulin binding"/>
    <property type="evidence" value="ECO:0000250"/>
    <property type="project" value="UniProtKB"/>
</dbReference>
<dbReference type="GO" id="GO:0070740">
    <property type="term" value="F:tubulin-glutamic acid ligase activity"/>
    <property type="evidence" value="ECO:0000250"/>
    <property type="project" value="UniProtKB"/>
</dbReference>
<dbReference type="GO" id="GO:0001578">
    <property type="term" value="P:microtubule bundle formation"/>
    <property type="evidence" value="ECO:0000318"/>
    <property type="project" value="GO_Central"/>
</dbReference>
<dbReference type="GO" id="GO:0051013">
    <property type="term" value="P:microtubule severing"/>
    <property type="evidence" value="ECO:0007669"/>
    <property type="project" value="Ensembl"/>
</dbReference>
<dbReference type="GO" id="GO:0003353">
    <property type="term" value="P:positive regulation of cilium movement"/>
    <property type="evidence" value="ECO:0007669"/>
    <property type="project" value="Ensembl"/>
</dbReference>
<dbReference type="GO" id="GO:0018095">
    <property type="term" value="P:protein polyglutamylation"/>
    <property type="evidence" value="ECO:0000250"/>
    <property type="project" value="UniProtKB"/>
</dbReference>
<dbReference type="GO" id="GO:0060296">
    <property type="term" value="P:regulation of cilium beat frequency involved in ciliary motility"/>
    <property type="evidence" value="ECO:0000250"/>
    <property type="project" value="UniProtKB"/>
</dbReference>
<dbReference type="FunFam" id="3.30.470.20:FF:000009">
    <property type="entry name" value="tubulin polyglutamylase TTLL5 isoform X1"/>
    <property type="match status" value="1"/>
</dbReference>
<dbReference type="Gene3D" id="3.30.470.20">
    <property type="entry name" value="ATP-grasp fold, B domain"/>
    <property type="match status" value="1"/>
</dbReference>
<dbReference type="InterPro" id="IPR004344">
    <property type="entry name" value="TTL/TTLL_fam"/>
</dbReference>
<dbReference type="PANTHER" id="PTHR12241">
    <property type="entry name" value="TUBULIN POLYGLUTAMYLASE"/>
    <property type="match status" value="1"/>
</dbReference>
<dbReference type="PANTHER" id="PTHR12241:SF96">
    <property type="entry name" value="TUBULIN POLYGLUTAMYLASE TTLL6"/>
    <property type="match status" value="1"/>
</dbReference>
<dbReference type="Pfam" id="PF03133">
    <property type="entry name" value="TTL"/>
    <property type="match status" value="1"/>
</dbReference>
<dbReference type="SUPFAM" id="SSF56059">
    <property type="entry name" value="Glutathione synthetase ATP-binding domain-like"/>
    <property type="match status" value="1"/>
</dbReference>
<dbReference type="PROSITE" id="PS51221">
    <property type="entry name" value="TTL"/>
    <property type="match status" value="1"/>
</dbReference>
<gene>
    <name evidence="19" type="primary">TTLL6</name>
    <name evidence="14" type="synonym">TTL.6</name>
</gene>
<name>TTLL6_HUMAN</name>
<accession>Q8N841</accession>
<accession>B4DZJ5</accession>
<accession>C9J233</accession>
<accession>Q24KB1</accession>
<accession>Q24KB2</accession>
<accession>Q24KB6</accession>
<accession>Q24KF3</accession>
<accession>Q24KJ5</accession>
<accession>Q24KN7</accession>
<accession>Q24KS9</accession>
<accession>Q24KX1</accession>
<accession>Q24L13</accession>
<accession>Q24L55</accession>
<accession>Q24L76</accession>
<accession>Q658K6</accession>
<accession>Q8IYW6</accession>
<accession>Q8NA62</accession>
<sequence length="891" mass="101292">MGALLLHPSRRGPAGVVASWTSSPAGRDGGVGIAGAWYFPRASSQAREMPQCPTLESQEGENSEEKGDSSKEDPKETVALAFVRENPGAQNGLQNAQQQGKKKRKKKRLVINLSSCRYESVRRAAQQYGFREGGEDDDWTLYWTDYSVSLERVMEMKSYQKINHFPGMSEICRKDLLARNMSRMLKMFPKDFRFFPRTWCLPADWGDLQTYSRSRKNKTYICKPDSGCQGKGIFITRTVKEIKPGEDMICQLYISKPFIIDGFKFDLRIYVLVTSCDPLRIFVYNEGLARFATTSYSRPCTDNLDDICMHLTNYSINKHSSNFSRDAHSGSKRKLSTFSAYLEDHSYNVEQIWRDIEDVIIKTLISAHPIIRHNYHTCFPNHTLNSACFEILGFDILLDHKLKPWLLEVNHSPSFSTDSRLDKEVKDGLLYDTLVLINLESCDKKKVLEEERQRGQFLQQCCSREMRIEEAKGFRAVQLKKTETYEKENCGGFRLIYPSLNSEKYEKFFQDNNSLFQNTVASRAREEYARQLIQELRLKREKKPFQMKKKVEMQGESAGEQVRKKGMRGWQQKQQQKDKAATQASKQYIQPLTLVSYTPDLLLSVRGERKNETDSSLNQEAPTEEASSVFPKLTSAKPFSSLPDLRNINLSSSKLEPSKPNFSIKEAKSASAVNVFTGTVHLTSVETTPESTTQLSISPKSPPTLAVTASSEYSGPETDRVVSFKCKKQQTPPHLTQKKMLKSFLPTKSKSFWESPNTNWTLLKSDMNKPHLISELLTKLQLSGKLSFFPAHYNPKLGMNNLSQNPSLPGECHSRSDSSGEKRQLDVSSLLLQSPQSYNVTLRDLLVIATPAQLDPRPCRSHASAMRDPCMQDQEAYSHCLISGQKGCERS</sequence>